<feature type="chain" id="PRO_1000086841" description="Small ribosomal subunit protein uS17">
    <location>
        <begin position="1"/>
        <end position="83"/>
    </location>
</feature>
<proteinExistence type="inferred from homology"/>
<name>RS17_FRAP2</name>
<protein>
    <recommendedName>
        <fullName evidence="1">Small ribosomal subunit protein uS17</fullName>
    </recommendedName>
    <alternativeName>
        <fullName evidence="2">30S ribosomal protein S17</fullName>
    </alternativeName>
</protein>
<dbReference type="EMBL" id="CP000937">
    <property type="protein sequence ID" value="ABZ86796.1"/>
    <property type="molecule type" value="Genomic_DNA"/>
</dbReference>
<dbReference type="SMR" id="B0U0Y0"/>
<dbReference type="KEGG" id="fph:Fphi_0578"/>
<dbReference type="eggNOG" id="COG0186">
    <property type="taxonomic scope" value="Bacteria"/>
</dbReference>
<dbReference type="HOGENOM" id="CLU_073626_1_1_6"/>
<dbReference type="GO" id="GO:0022627">
    <property type="term" value="C:cytosolic small ribosomal subunit"/>
    <property type="evidence" value="ECO:0007669"/>
    <property type="project" value="TreeGrafter"/>
</dbReference>
<dbReference type="GO" id="GO:0019843">
    <property type="term" value="F:rRNA binding"/>
    <property type="evidence" value="ECO:0007669"/>
    <property type="project" value="UniProtKB-UniRule"/>
</dbReference>
<dbReference type="GO" id="GO:0003735">
    <property type="term" value="F:structural constituent of ribosome"/>
    <property type="evidence" value="ECO:0007669"/>
    <property type="project" value="InterPro"/>
</dbReference>
<dbReference type="GO" id="GO:0006412">
    <property type="term" value="P:translation"/>
    <property type="evidence" value="ECO:0007669"/>
    <property type="project" value="UniProtKB-UniRule"/>
</dbReference>
<dbReference type="CDD" id="cd00364">
    <property type="entry name" value="Ribosomal_uS17"/>
    <property type="match status" value="1"/>
</dbReference>
<dbReference type="Gene3D" id="2.40.50.140">
    <property type="entry name" value="Nucleic acid-binding proteins"/>
    <property type="match status" value="1"/>
</dbReference>
<dbReference type="HAMAP" id="MF_01345_B">
    <property type="entry name" value="Ribosomal_uS17_B"/>
    <property type="match status" value="1"/>
</dbReference>
<dbReference type="InterPro" id="IPR012340">
    <property type="entry name" value="NA-bd_OB-fold"/>
</dbReference>
<dbReference type="InterPro" id="IPR000266">
    <property type="entry name" value="Ribosomal_uS17"/>
</dbReference>
<dbReference type="InterPro" id="IPR019984">
    <property type="entry name" value="Ribosomal_uS17_bact/chlr"/>
</dbReference>
<dbReference type="NCBIfam" id="NF004123">
    <property type="entry name" value="PRK05610.1"/>
    <property type="match status" value="1"/>
</dbReference>
<dbReference type="NCBIfam" id="TIGR03635">
    <property type="entry name" value="uS17_bact"/>
    <property type="match status" value="1"/>
</dbReference>
<dbReference type="PANTHER" id="PTHR10744">
    <property type="entry name" value="40S RIBOSOMAL PROTEIN S11 FAMILY MEMBER"/>
    <property type="match status" value="1"/>
</dbReference>
<dbReference type="PANTHER" id="PTHR10744:SF1">
    <property type="entry name" value="SMALL RIBOSOMAL SUBUNIT PROTEIN US17M"/>
    <property type="match status" value="1"/>
</dbReference>
<dbReference type="Pfam" id="PF00366">
    <property type="entry name" value="Ribosomal_S17"/>
    <property type="match status" value="1"/>
</dbReference>
<dbReference type="PRINTS" id="PR00973">
    <property type="entry name" value="RIBOSOMALS17"/>
</dbReference>
<dbReference type="SUPFAM" id="SSF50249">
    <property type="entry name" value="Nucleic acid-binding proteins"/>
    <property type="match status" value="1"/>
</dbReference>
<sequence>MSDKIRLLEGKVSSVAMDKTVVVRAERYVKHPLYGKFVKKTTKYYVHDEKNECKEGDVIKFKETRPYSKTKKWCLVDIINREK</sequence>
<organism>
    <name type="scientific">Francisella philomiragia subsp. philomiragia (strain ATCC 25017 / CCUG 19701 / FSC 153 / O#319-036)</name>
    <dbReference type="NCBI Taxonomy" id="484022"/>
    <lineage>
        <taxon>Bacteria</taxon>
        <taxon>Pseudomonadati</taxon>
        <taxon>Pseudomonadota</taxon>
        <taxon>Gammaproteobacteria</taxon>
        <taxon>Thiotrichales</taxon>
        <taxon>Francisellaceae</taxon>
        <taxon>Francisella</taxon>
    </lineage>
</organism>
<accession>B0U0Y0</accession>
<keyword id="KW-0687">Ribonucleoprotein</keyword>
<keyword id="KW-0689">Ribosomal protein</keyword>
<keyword id="KW-0694">RNA-binding</keyword>
<keyword id="KW-0699">rRNA-binding</keyword>
<gene>
    <name evidence="1" type="primary">rpsQ</name>
    <name type="ordered locus">Fphi_0578</name>
</gene>
<evidence type="ECO:0000255" key="1">
    <source>
        <dbReference type="HAMAP-Rule" id="MF_01345"/>
    </source>
</evidence>
<evidence type="ECO:0000305" key="2"/>
<reference key="1">
    <citation type="submission" date="2007-12" db="EMBL/GenBank/DDBJ databases">
        <title>Complete sequence of chromosome of Francisella philomiragia subsp. philomiragia ATCC 25017.</title>
        <authorList>
            <consortium name="US DOE Joint Genome Institute"/>
            <person name="Copeland A."/>
            <person name="Lucas S."/>
            <person name="Lapidus A."/>
            <person name="Barry K."/>
            <person name="Detter J.C."/>
            <person name="Glavina del Rio T."/>
            <person name="Hammon N."/>
            <person name="Israni S."/>
            <person name="Dalin E."/>
            <person name="Tice H."/>
            <person name="Pitluck S."/>
            <person name="Chain P."/>
            <person name="Malfatti S."/>
            <person name="Shin M."/>
            <person name="Vergez L."/>
            <person name="Schmutz J."/>
            <person name="Larimer F."/>
            <person name="Land M."/>
            <person name="Hauser L."/>
            <person name="Richardson P."/>
        </authorList>
    </citation>
    <scope>NUCLEOTIDE SEQUENCE [LARGE SCALE GENOMIC DNA]</scope>
    <source>
        <strain>ATCC 25017 / CCUG 19701 / FSC 153 / O#319-036</strain>
    </source>
</reference>
<comment type="function">
    <text evidence="1">One of the primary rRNA binding proteins, it binds specifically to the 5'-end of 16S ribosomal RNA.</text>
</comment>
<comment type="subunit">
    <text evidence="1">Part of the 30S ribosomal subunit.</text>
</comment>
<comment type="similarity">
    <text evidence="1">Belongs to the universal ribosomal protein uS17 family.</text>
</comment>